<comment type="function">
    <text evidence="1">Co-chaperone involved in the maturation of iron-sulfur cluster-containing proteins. Seems to help targeting proteins to be folded toward HscA.</text>
</comment>
<comment type="subunit">
    <text evidence="1">Interacts with HscA and stimulates its ATPase activity. Interacts with IscU.</text>
</comment>
<comment type="similarity">
    <text evidence="1">Belongs to the HscB family.</text>
</comment>
<accession>A1AE64</accession>
<feature type="chain" id="PRO_1000083008" description="Co-chaperone protein HscB">
    <location>
        <begin position="1"/>
        <end position="171"/>
    </location>
</feature>
<feature type="domain" description="J" evidence="1">
    <location>
        <begin position="2"/>
        <end position="74"/>
    </location>
</feature>
<reference key="1">
    <citation type="journal article" date="2007" name="J. Bacteriol.">
        <title>The genome sequence of avian pathogenic Escherichia coli strain O1:K1:H7 shares strong similarities with human extraintestinal pathogenic E. coli genomes.</title>
        <authorList>
            <person name="Johnson T.J."/>
            <person name="Kariyawasam S."/>
            <person name="Wannemuehler Y."/>
            <person name="Mangiamele P."/>
            <person name="Johnson S.J."/>
            <person name="Doetkott C."/>
            <person name="Skyberg J.A."/>
            <person name="Lynne A.M."/>
            <person name="Johnson J.R."/>
            <person name="Nolan L.K."/>
        </authorList>
    </citation>
    <scope>NUCLEOTIDE SEQUENCE [LARGE SCALE GENOMIC DNA]</scope>
</reference>
<proteinExistence type="inferred from homology"/>
<sequence>MDYFTLFGLPARYQLDTQALSLRFQDLQRQYHPDKFASGSQAEQLAAVQQSATINQAWQTLRHPLMRAEYLLSLHGFDLASEQHTVRDTAFLMEQLELREELDEIEQAKDEARLESFIKRVKKMFDTRHQLMVEQLDNETWDAAADTVRKLRFLDKLRSSAEQLEEKLLDF</sequence>
<gene>
    <name evidence="1" type="primary">hscB</name>
    <name type="ordered locus">Ecok1_24600</name>
    <name type="ORF">APECO1_3998</name>
</gene>
<dbReference type="EMBL" id="CP000468">
    <property type="protein sequence ID" value="ABJ01954.1"/>
    <property type="molecule type" value="Genomic_DNA"/>
</dbReference>
<dbReference type="RefSeq" id="WP_000384413.1">
    <property type="nucleotide sequence ID" value="NZ_CADILS010000012.1"/>
</dbReference>
<dbReference type="BMRB" id="A1AE64"/>
<dbReference type="SMR" id="A1AE64"/>
<dbReference type="GeneID" id="75172640"/>
<dbReference type="KEGG" id="ecv:APECO1_3998"/>
<dbReference type="HOGENOM" id="CLU_068529_2_0_6"/>
<dbReference type="Proteomes" id="UP000008216">
    <property type="component" value="Chromosome"/>
</dbReference>
<dbReference type="GO" id="GO:1990230">
    <property type="term" value="C:iron-sulfur cluster transfer complex"/>
    <property type="evidence" value="ECO:0007669"/>
    <property type="project" value="TreeGrafter"/>
</dbReference>
<dbReference type="GO" id="GO:0001671">
    <property type="term" value="F:ATPase activator activity"/>
    <property type="evidence" value="ECO:0007669"/>
    <property type="project" value="InterPro"/>
</dbReference>
<dbReference type="GO" id="GO:0051087">
    <property type="term" value="F:protein-folding chaperone binding"/>
    <property type="evidence" value="ECO:0007669"/>
    <property type="project" value="InterPro"/>
</dbReference>
<dbReference type="GO" id="GO:0044571">
    <property type="term" value="P:[2Fe-2S] cluster assembly"/>
    <property type="evidence" value="ECO:0007669"/>
    <property type="project" value="InterPro"/>
</dbReference>
<dbReference type="GO" id="GO:0051259">
    <property type="term" value="P:protein complex oligomerization"/>
    <property type="evidence" value="ECO:0007669"/>
    <property type="project" value="InterPro"/>
</dbReference>
<dbReference type="GO" id="GO:0006457">
    <property type="term" value="P:protein folding"/>
    <property type="evidence" value="ECO:0007669"/>
    <property type="project" value="UniProtKB-UniRule"/>
</dbReference>
<dbReference type="CDD" id="cd06257">
    <property type="entry name" value="DnaJ"/>
    <property type="match status" value="1"/>
</dbReference>
<dbReference type="FunFam" id="1.10.287.110:FF:000008">
    <property type="entry name" value="Co-chaperone protein HscB"/>
    <property type="match status" value="1"/>
</dbReference>
<dbReference type="FunFam" id="1.20.1280.20:FF:000001">
    <property type="entry name" value="Co-chaperone protein HscB"/>
    <property type="match status" value="1"/>
</dbReference>
<dbReference type="Gene3D" id="1.10.287.110">
    <property type="entry name" value="DnaJ domain"/>
    <property type="match status" value="1"/>
</dbReference>
<dbReference type="Gene3D" id="1.20.1280.20">
    <property type="entry name" value="HscB, C-terminal domain"/>
    <property type="match status" value="1"/>
</dbReference>
<dbReference type="HAMAP" id="MF_00682">
    <property type="entry name" value="HscB"/>
    <property type="match status" value="1"/>
</dbReference>
<dbReference type="InterPro" id="IPR001623">
    <property type="entry name" value="DnaJ_domain"/>
</dbReference>
<dbReference type="InterPro" id="IPR004640">
    <property type="entry name" value="HscB"/>
</dbReference>
<dbReference type="InterPro" id="IPR036386">
    <property type="entry name" value="HscB_C_sf"/>
</dbReference>
<dbReference type="InterPro" id="IPR009073">
    <property type="entry name" value="HscB_oligo_C"/>
</dbReference>
<dbReference type="InterPro" id="IPR036869">
    <property type="entry name" value="J_dom_sf"/>
</dbReference>
<dbReference type="NCBIfam" id="TIGR00714">
    <property type="entry name" value="hscB"/>
    <property type="match status" value="1"/>
</dbReference>
<dbReference type="NCBIfam" id="NF003449">
    <property type="entry name" value="PRK05014.1"/>
    <property type="match status" value="1"/>
</dbReference>
<dbReference type="PANTHER" id="PTHR14021">
    <property type="entry name" value="IRON-SULFUR CLUSTER CO-CHAPERONE PROTEIN HSCB"/>
    <property type="match status" value="1"/>
</dbReference>
<dbReference type="PANTHER" id="PTHR14021:SF15">
    <property type="entry name" value="IRON-SULFUR CLUSTER CO-CHAPERONE PROTEIN HSCB"/>
    <property type="match status" value="1"/>
</dbReference>
<dbReference type="Pfam" id="PF07743">
    <property type="entry name" value="HSCB_C"/>
    <property type="match status" value="1"/>
</dbReference>
<dbReference type="SMART" id="SM00271">
    <property type="entry name" value="DnaJ"/>
    <property type="match status" value="1"/>
</dbReference>
<dbReference type="SUPFAM" id="SSF46565">
    <property type="entry name" value="Chaperone J-domain"/>
    <property type="match status" value="1"/>
</dbReference>
<dbReference type="SUPFAM" id="SSF47144">
    <property type="entry name" value="HSC20 (HSCB), C-terminal oligomerisation domain"/>
    <property type="match status" value="1"/>
</dbReference>
<dbReference type="PROSITE" id="PS50076">
    <property type="entry name" value="DNAJ_2"/>
    <property type="match status" value="1"/>
</dbReference>
<protein>
    <recommendedName>
        <fullName evidence="1">Co-chaperone protein HscB</fullName>
    </recommendedName>
    <alternativeName>
        <fullName evidence="1">Hsc20</fullName>
    </alternativeName>
</protein>
<name>HSCB_ECOK1</name>
<evidence type="ECO:0000255" key="1">
    <source>
        <dbReference type="HAMAP-Rule" id="MF_00682"/>
    </source>
</evidence>
<keyword id="KW-0143">Chaperone</keyword>
<keyword id="KW-1185">Reference proteome</keyword>
<organism>
    <name type="scientific">Escherichia coli O1:K1 / APEC</name>
    <dbReference type="NCBI Taxonomy" id="405955"/>
    <lineage>
        <taxon>Bacteria</taxon>
        <taxon>Pseudomonadati</taxon>
        <taxon>Pseudomonadota</taxon>
        <taxon>Gammaproteobacteria</taxon>
        <taxon>Enterobacterales</taxon>
        <taxon>Enterobacteriaceae</taxon>
        <taxon>Escherichia</taxon>
    </lineage>
</organism>